<accession>C1F792</accession>
<organism>
    <name type="scientific">Acidobacterium capsulatum (strain ATCC 51196 / DSM 11244 / BCRC 80197 / JCM 7670 / NBRC 15755 / NCIMB 13165 / 161)</name>
    <dbReference type="NCBI Taxonomy" id="240015"/>
    <lineage>
        <taxon>Bacteria</taxon>
        <taxon>Pseudomonadati</taxon>
        <taxon>Acidobacteriota</taxon>
        <taxon>Terriglobia</taxon>
        <taxon>Terriglobales</taxon>
        <taxon>Acidobacteriaceae</taxon>
        <taxon>Acidobacterium</taxon>
    </lineage>
</organism>
<keyword id="KW-0067">ATP-binding</keyword>
<keyword id="KW-0963">Cytoplasm</keyword>
<keyword id="KW-1015">Disulfide bond</keyword>
<keyword id="KW-0547">Nucleotide-binding</keyword>
<keyword id="KW-1185">Reference proteome</keyword>
<keyword id="KW-0694">RNA-binding</keyword>
<keyword id="KW-0808">Transferase</keyword>
<keyword id="KW-0819">tRNA processing</keyword>
<keyword id="KW-0820">tRNA-binding</keyword>
<protein>
    <recommendedName>
        <fullName evidence="1">tRNA-specific 2-thiouridylase MnmA</fullName>
        <ecNumber evidence="1">2.8.1.13</ecNumber>
    </recommendedName>
</protein>
<comment type="function">
    <text evidence="1">Catalyzes the 2-thiolation of uridine at the wobble position (U34) of tRNA, leading to the formation of s(2)U34.</text>
</comment>
<comment type="catalytic activity">
    <reaction evidence="1">
        <text>S-sulfanyl-L-cysteinyl-[protein] + uridine(34) in tRNA + AH2 + ATP = 2-thiouridine(34) in tRNA + L-cysteinyl-[protein] + A + AMP + diphosphate + H(+)</text>
        <dbReference type="Rhea" id="RHEA:47032"/>
        <dbReference type="Rhea" id="RHEA-COMP:10131"/>
        <dbReference type="Rhea" id="RHEA-COMP:11726"/>
        <dbReference type="Rhea" id="RHEA-COMP:11727"/>
        <dbReference type="Rhea" id="RHEA-COMP:11728"/>
        <dbReference type="ChEBI" id="CHEBI:13193"/>
        <dbReference type="ChEBI" id="CHEBI:15378"/>
        <dbReference type="ChEBI" id="CHEBI:17499"/>
        <dbReference type="ChEBI" id="CHEBI:29950"/>
        <dbReference type="ChEBI" id="CHEBI:30616"/>
        <dbReference type="ChEBI" id="CHEBI:33019"/>
        <dbReference type="ChEBI" id="CHEBI:61963"/>
        <dbReference type="ChEBI" id="CHEBI:65315"/>
        <dbReference type="ChEBI" id="CHEBI:87170"/>
        <dbReference type="ChEBI" id="CHEBI:456215"/>
        <dbReference type="EC" id="2.8.1.13"/>
    </reaction>
</comment>
<comment type="subcellular location">
    <subcellularLocation>
        <location evidence="1">Cytoplasm</location>
    </subcellularLocation>
</comment>
<comment type="similarity">
    <text evidence="1">Belongs to the MnmA/TRMU family.</text>
</comment>
<gene>
    <name evidence="1" type="primary">mnmA</name>
    <name type="ordered locus">ACP_1647</name>
</gene>
<proteinExistence type="inferred from homology"/>
<dbReference type="EC" id="2.8.1.13" evidence="1"/>
<dbReference type="EMBL" id="CP001472">
    <property type="protein sequence ID" value="ACO32893.1"/>
    <property type="molecule type" value="Genomic_DNA"/>
</dbReference>
<dbReference type="RefSeq" id="WP_015896772.1">
    <property type="nucleotide sequence ID" value="NC_012483.1"/>
</dbReference>
<dbReference type="SMR" id="C1F792"/>
<dbReference type="FunCoup" id="C1F792">
    <property type="interactions" value="557"/>
</dbReference>
<dbReference type="STRING" id="240015.ACP_1647"/>
<dbReference type="KEGG" id="aca:ACP_1647"/>
<dbReference type="eggNOG" id="COG0482">
    <property type="taxonomic scope" value="Bacteria"/>
</dbReference>
<dbReference type="HOGENOM" id="CLU_035188_0_0_0"/>
<dbReference type="InParanoid" id="C1F792"/>
<dbReference type="OrthoDB" id="9800696at2"/>
<dbReference type="Proteomes" id="UP000002207">
    <property type="component" value="Chromosome"/>
</dbReference>
<dbReference type="GO" id="GO:0005737">
    <property type="term" value="C:cytoplasm"/>
    <property type="evidence" value="ECO:0007669"/>
    <property type="project" value="UniProtKB-SubCell"/>
</dbReference>
<dbReference type="GO" id="GO:0005524">
    <property type="term" value="F:ATP binding"/>
    <property type="evidence" value="ECO:0007669"/>
    <property type="project" value="UniProtKB-KW"/>
</dbReference>
<dbReference type="GO" id="GO:0000049">
    <property type="term" value="F:tRNA binding"/>
    <property type="evidence" value="ECO:0007669"/>
    <property type="project" value="UniProtKB-KW"/>
</dbReference>
<dbReference type="GO" id="GO:0103016">
    <property type="term" value="F:tRNA-uridine 2-sulfurtransferase activity"/>
    <property type="evidence" value="ECO:0007669"/>
    <property type="project" value="UniProtKB-EC"/>
</dbReference>
<dbReference type="GO" id="GO:0002143">
    <property type="term" value="P:tRNA wobble position uridine thiolation"/>
    <property type="evidence" value="ECO:0007669"/>
    <property type="project" value="TreeGrafter"/>
</dbReference>
<dbReference type="CDD" id="cd01998">
    <property type="entry name" value="MnmA_TRMU-like"/>
    <property type="match status" value="1"/>
</dbReference>
<dbReference type="FunFam" id="3.40.50.620:FF:000115">
    <property type="entry name" value="tRNA-specific 2-thiouridylase MnmA"/>
    <property type="match status" value="1"/>
</dbReference>
<dbReference type="Gene3D" id="2.30.30.280">
    <property type="entry name" value="Adenine nucleotide alpha hydrolases-like domains"/>
    <property type="match status" value="1"/>
</dbReference>
<dbReference type="Gene3D" id="3.40.50.620">
    <property type="entry name" value="HUPs"/>
    <property type="match status" value="1"/>
</dbReference>
<dbReference type="Gene3D" id="2.40.30.10">
    <property type="entry name" value="Translation factors"/>
    <property type="match status" value="1"/>
</dbReference>
<dbReference type="HAMAP" id="MF_00144">
    <property type="entry name" value="tRNA_thiouridyl_MnmA"/>
    <property type="match status" value="1"/>
</dbReference>
<dbReference type="InterPro" id="IPR004506">
    <property type="entry name" value="MnmA-like"/>
</dbReference>
<dbReference type="InterPro" id="IPR046885">
    <property type="entry name" value="MnmA-like_C"/>
</dbReference>
<dbReference type="InterPro" id="IPR046884">
    <property type="entry name" value="MnmA-like_central"/>
</dbReference>
<dbReference type="InterPro" id="IPR023382">
    <property type="entry name" value="MnmA-like_central_sf"/>
</dbReference>
<dbReference type="InterPro" id="IPR014729">
    <property type="entry name" value="Rossmann-like_a/b/a_fold"/>
</dbReference>
<dbReference type="NCBIfam" id="NF001138">
    <property type="entry name" value="PRK00143.1"/>
    <property type="match status" value="1"/>
</dbReference>
<dbReference type="NCBIfam" id="TIGR00420">
    <property type="entry name" value="trmU"/>
    <property type="match status" value="1"/>
</dbReference>
<dbReference type="PANTHER" id="PTHR11933:SF5">
    <property type="entry name" value="MITOCHONDRIAL TRNA-SPECIFIC 2-THIOURIDYLASE 1"/>
    <property type="match status" value="1"/>
</dbReference>
<dbReference type="PANTHER" id="PTHR11933">
    <property type="entry name" value="TRNA 5-METHYLAMINOMETHYL-2-THIOURIDYLATE -METHYLTRANSFERASE"/>
    <property type="match status" value="1"/>
</dbReference>
<dbReference type="Pfam" id="PF03054">
    <property type="entry name" value="tRNA_Me_trans"/>
    <property type="match status" value="1"/>
</dbReference>
<dbReference type="Pfam" id="PF20258">
    <property type="entry name" value="tRNA_Me_trans_C"/>
    <property type="match status" value="1"/>
</dbReference>
<dbReference type="Pfam" id="PF20259">
    <property type="entry name" value="tRNA_Me_trans_M"/>
    <property type="match status" value="1"/>
</dbReference>
<dbReference type="SUPFAM" id="SSF52402">
    <property type="entry name" value="Adenine nucleotide alpha hydrolases-like"/>
    <property type="match status" value="1"/>
</dbReference>
<feature type="chain" id="PRO_1000203298" description="tRNA-specific 2-thiouridylase MnmA">
    <location>
        <begin position="1"/>
        <end position="374"/>
    </location>
</feature>
<feature type="region of interest" description="Interaction with tRNA" evidence="1">
    <location>
        <begin position="159"/>
        <end position="161"/>
    </location>
</feature>
<feature type="active site" description="Nucleophile" evidence="1">
    <location>
        <position position="111"/>
    </location>
</feature>
<feature type="active site" description="Cysteine persulfide intermediate" evidence="1">
    <location>
        <position position="209"/>
    </location>
</feature>
<feature type="binding site" evidence="1">
    <location>
        <begin position="10"/>
        <end position="17"/>
    </location>
    <ligand>
        <name>ATP</name>
        <dbReference type="ChEBI" id="CHEBI:30616"/>
    </ligand>
</feature>
<feature type="binding site" evidence="1">
    <location>
        <position position="36"/>
    </location>
    <ligand>
        <name>ATP</name>
        <dbReference type="ChEBI" id="CHEBI:30616"/>
    </ligand>
</feature>
<feature type="binding site" evidence="1">
    <location>
        <position position="135"/>
    </location>
    <ligand>
        <name>ATP</name>
        <dbReference type="ChEBI" id="CHEBI:30616"/>
    </ligand>
</feature>
<feature type="site" description="Interaction with tRNA" evidence="1">
    <location>
        <position position="136"/>
    </location>
</feature>
<feature type="site" description="Interaction with tRNA" evidence="1">
    <location>
        <position position="357"/>
    </location>
</feature>
<feature type="disulfide bond" description="Alternate" evidence="1">
    <location>
        <begin position="111"/>
        <end position="209"/>
    </location>
</feature>
<sequence length="374" mass="41652">MSFNNTVAVAMSGGVDSSTVAAMLREEGYDLIGLTLQLWNQRRLAGKDGMPEPVQGRCCSIDDVYDARRVAETLGIPYYLVNEQERFESDVVRPFVSEYLHGRTPIPCSLCNNHLKFDQLLLRARQFGADRIATGHYARNEYDPARGRWILKRPADRSKDQTWFLFGLTQEQLSRTLFPLGGYTKPEVREIAATHKLALAAKPDSQEICFIPNGDYKRFIDAYLDEQGESIPDSAGELVSTTGEVLGRHAGIHNFTVGQRKGLGVTAPNPLYVLQIDPASHRVTVGSDTELATETFRARDCNWISIADLTGERRAQVKIRHRHEPAWATVRPVRGADGTAEAEITFDEPQRAVTPGQSAVFYDEDEVIGGGWIV</sequence>
<evidence type="ECO:0000255" key="1">
    <source>
        <dbReference type="HAMAP-Rule" id="MF_00144"/>
    </source>
</evidence>
<name>MNMA_ACIC5</name>
<reference key="1">
    <citation type="journal article" date="2009" name="Appl. Environ. Microbiol.">
        <title>Three genomes from the phylum Acidobacteria provide insight into the lifestyles of these microorganisms in soils.</title>
        <authorList>
            <person name="Ward N.L."/>
            <person name="Challacombe J.F."/>
            <person name="Janssen P.H."/>
            <person name="Henrissat B."/>
            <person name="Coutinho P.M."/>
            <person name="Wu M."/>
            <person name="Xie G."/>
            <person name="Haft D.H."/>
            <person name="Sait M."/>
            <person name="Badger J."/>
            <person name="Barabote R.D."/>
            <person name="Bradley B."/>
            <person name="Brettin T.S."/>
            <person name="Brinkac L.M."/>
            <person name="Bruce D."/>
            <person name="Creasy T."/>
            <person name="Daugherty S.C."/>
            <person name="Davidsen T.M."/>
            <person name="DeBoy R.T."/>
            <person name="Detter J.C."/>
            <person name="Dodson R.J."/>
            <person name="Durkin A.S."/>
            <person name="Ganapathy A."/>
            <person name="Gwinn-Giglio M."/>
            <person name="Han C.S."/>
            <person name="Khouri H."/>
            <person name="Kiss H."/>
            <person name="Kothari S.P."/>
            <person name="Madupu R."/>
            <person name="Nelson K.E."/>
            <person name="Nelson W.C."/>
            <person name="Paulsen I."/>
            <person name="Penn K."/>
            <person name="Ren Q."/>
            <person name="Rosovitz M.J."/>
            <person name="Selengut J.D."/>
            <person name="Shrivastava S."/>
            <person name="Sullivan S.A."/>
            <person name="Tapia R."/>
            <person name="Thompson L.S."/>
            <person name="Watkins K.L."/>
            <person name="Yang Q."/>
            <person name="Yu C."/>
            <person name="Zafar N."/>
            <person name="Zhou L."/>
            <person name="Kuske C.R."/>
        </authorList>
    </citation>
    <scope>NUCLEOTIDE SEQUENCE [LARGE SCALE GENOMIC DNA]</scope>
    <source>
        <strain>ATCC 51196 / DSM 11244 / BCRC 80197 / JCM 7670 / NBRC 15755 / NCIMB 13165 / 161</strain>
    </source>
</reference>